<keyword id="KW-0535">Nitrogen fixation</keyword>
<reference key="1">
    <citation type="journal article" date="1995" name="Proc. Natl. Acad. Sci. U.S.A.">
        <title>A second nitrogenase in vegetative cells of a heterocyst-forming cyanobacterium.</title>
        <authorList>
            <person name="Thiel T."/>
            <person name="Lyons E.M."/>
            <person name="Erker J.C."/>
            <person name="Ernst A."/>
        </authorList>
    </citation>
    <scope>NUCLEOTIDE SEQUENCE [GENOMIC DNA]</scope>
    <scope>INDUCTION</scope>
    <scope>DEVELOPMENTAL STAGE</scope>
</reference>
<reference key="2">
    <citation type="journal article" date="2014" name="Stand. Genomic Sci.">
        <title>Complete genome sequence of Anabaena variabilis ATCC 29413.</title>
        <authorList>
            <person name="Thiel T."/>
            <person name="Pratte B.S."/>
            <person name="Zhong J."/>
            <person name="Goodwin L."/>
            <person name="Copeland A."/>
            <person name="Lucas S."/>
            <person name="Han C."/>
            <person name="Pitluck S."/>
            <person name="Land M.L."/>
            <person name="Kyrpides N.C."/>
            <person name="Woyke T."/>
        </authorList>
    </citation>
    <scope>NUCLEOTIDE SEQUENCE [LARGE SCALE GENOMIC DNA]</scope>
    <source>
        <strain>ATCC 29413 / PCC 7937</strain>
    </source>
</reference>
<reference key="3">
    <citation type="journal article" date="1995" name="Mol. Microbiol.">
        <title>Distinct and differently regulated Mo-dependent nitrogen-fixing systems evolved for heterocysts and vegetative cells of Anabaena variabilis ATCC 29413: characterization of the fdxH1/2 gene regions as part of the nif1/2 gene clusters.</title>
        <authorList>
            <person name="Schrautemeier B."/>
            <person name="Neveling U."/>
            <person name="Schmitz S."/>
        </authorList>
    </citation>
    <scope>NUCLEOTIDE SEQUENCE [GENOMIC DNA] OF 72-105</scope>
</reference>
<gene>
    <name type="primary">nifW2</name>
    <name type="ordered locus">Ava_4255</name>
</gene>
<organism>
    <name type="scientific">Trichormus variabilis (strain ATCC 29413 / PCC 7937)</name>
    <name type="common">Anabaena variabilis</name>
    <dbReference type="NCBI Taxonomy" id="240292"/>
    <lineage>
        <taxon>Bacteria</taxon>
        <taxon>Bacillati</taxon>
        <taxon>Cyanobacteriota</taxon>
        <taxon>Cyanophyceae</taxon>
        <taxon>Nostocales</taxon>
        <taxon>Nostocaceae</taxon>
        <taxon>Trichormus</taxon>
    </lineage>
</organism>
<comment type="function">
    <text evidence="1">May protect the nitrogenase Fe-Mo protein from oxidative damage.</text>
</comment>
<comment type="developmental stage">
    <text evidence="2">Expressed in vegetative cells and heterocysts.</text>
</comment>
<comment type="induction">
    <text evidence="2">By anaerobic conditions.</text>
</comment>
<comment type="similarity">
    <text evidence="3">Belongs to the NifW family.</text>
</comment>
<proteinExistence type="evidence at transcript level"/>
<evidence type="ECO:0000250" key="1"/>
<evidence type="ECO:0000269" key="2">
    <source>
    </source>
</evidence>
<evidence type="ECO:0000305" key="3"/>
<protein>
    <recommendedName>
        <fullName>Nitrogenase-stabilizing/protective protein NifW 2</fullName>
    </recommendedName>
</protein>
<feature type="chain" id="PRO_0000219524" description="Nitrogenase-stabilizing/protective protein NifW 2">
    <location>
        <begin position="1"/>
        <end position="105"/>
    </location>
</feature>
<name>NIFW2_TRIV2</name>
<dbReference type="EMBL" id="U49859">
    <property type="protein sequence ID" value="AAA93028.1"/>
    <property type="molecule type" value="Genomic_DNA"/>
</dbReference>
<dbReference type="EMBL" id="Z46890">
    <property type="protein sequence ID" value="CAA86988.1"/>
    <property type="molecule type" value="Genomic_DNA"/>
</dbReference>
<dbReference type="EMBL" id="CP000117">
    <property type="protein sequence ID" value="ABA23854.1"/>
    <property type="molecule type" value="Genomic_DNA"/>
</dbReference>
<dbReference type="PIR" id="S70246">
    <property type="entry name" value="S70246"/>
</dbReference>
<dbReference type="SMR" id="P46054"/>
<dbReference type="STRING" id="240292.Ava_4255"/>
<dbReference type="DNASU" id="3680903"/>
<dbReference type="KEGG" id="ava:Ava_4255"/>
<dbReference type="eggNOG" id="ENOG50330W8">
    <property type="taxonomic scope" value="Bacteria"/>
</dbReference>
<dbReference type="HOGENOM" id="CLU_145318_1_0_3"/>
<dbReference type="Proteomes" id="UP000002533">
    <property type="component" value="Chromosome"/>
</dbReference>
<dbReference type="GO" id="GO:0009399">
    <property type="term" value="P:nitrogen fixation"/>
    <property type="evidence" value="ECO:0007669"/>
    <property type="project" value="UniProtKB-UniRule"/>
</dbReference>
<dbReference type="HAMAP" id="MF_00529">
    <property type="entry name" value="NifW"/>
    <property type="match status" value="1"/>
</dbReference>
<dbReference type="InterPro" id="IPR004893">
    <property type="entry name" value="NifW"/>
</dbReference>
<dbReference type="NCBIfam" id="NF010702">
    <property type="entry name" value="PRK14102.1"/>
    <property type="match status" value="1"/>
</dbReference>
<dbReference type="Pfam" id="PF03206">
    <property type="entry name" value="NifW"/>
    <property type="match status" value="1"/>
</dbReference>
<dbReference type="PIRSF" id="PIRSF005790">
    <property type="entry name" value="NifW"/>
    <property type="match status" value="1"/>
</dbReference>
<sequence>MTWDIEQFNKLVSAEEYFEFFQLPYDPRVVQVSRLHILKQFSQSIQEIDANNSQASQAEKLDLYCTALKQAYEVFLSSTPLEQKLFKVFKQKPKNIVMLTEIATS</sequence>
<accession>P46054</accession>
<accession>Q3M582</accession>